<dbReference type="EC" id="2.7.1.23" evidence="1"/>
<dbReference type="EMBL" id="CP000412">
    <property type="protein sequence ID" value="ABJ58159.1"/>
    <property type="molecule type" value="Genomic_DNA"/>
</dbReference>
<dbReference type="RefSeq" id="WP_003618877.1">
    <property type="nucleotide sequence ID" value="NC_008529.1"/>
</dbReference>
<dbReference type="SMR" id="Q04BL3"/>
<dbReference type="KEGG" id="lbu:LBUL_0520"/>
<dbReference type="HOGENOM" id="CLU_008831_0_3_9"/>
<dbReference type="BioCyc" id="LDEL321956:LBUL_RS02470-MONOMER"/>
<dbReference type="GO" id="GO:0005737">
    <property type="term" value="C:cytoplasm"/>
    <property type="evidence" value="ECO:0007669"/>
    <property type="project" value="UniProtKB-SubCell"/>
</dbReference>
<dbReference type="GO" id="GO:0005524">
    <property type="term" value="F:ATP binding"/>
    <property type="evidence" value="ECO:0007669"/>
    <property type="project" value="UniProtKB-KW"/>
</dbReference>
<dbReference type="GO" id="GO:0046872">
    <property type="term" value="F:metal ion binding"/>
    <property type="evidence" value="ECO:0007669"/>
    <property type="project" value="UniProtKB-UniRule"/>
</dbReference>
<dbReference type="GO" id="GO:0051287">
    <property type="term" value="F:NAD binding"/>
    <property type="evidence" value="ECO:0007669"/>
    <property type="project" value="UniProtKB-ARBA"/>
</dbReference>
<dbReference type="GO" id="GO:0003951">
    <property type="term" value="F:NAD+ kinase activity"/>
    <property type="evidence" value="ECO:0007669"/>
    <property type="project" value="UniProtKB-UniRule"/>
</dbReference>
<dbReference type="GO" id="GO:0019674">
    <property type="term" value="P:NAD metabolic process"/>
    <property type="evidence" value="ECO:0007669"/>
    <property type="project" value="InterPro"/>
</dbReference>
<dbReference type="GO" id="GO:0006741">
    <property type="term" value="P:NADP biosynthetic process"/>
    <property type="evidence" value="ECO:0007669"/>
    <property type="project" value="UniProtKB-UniRule"/>
</dbReference>
<dbReference type="Gene3D" id="3.40.50.10330">
    <property type="entry name" value="Probable inorganic polyphosphate/atp-NAD kinase, domain 1"/>
    <property type="match status" value="1"/>
</dbReference>
<dbReference type="Gene3D" id="2.60.200.30">
    <property type="entry name" value="Probable inorganic polyphosphate/atp-NAD kinase, domain 2"/>
    <property type="match status" value="1"/>
</dbReference>
<dbReference type="HAMAP" id="MF_00361">
    <property type="entry name" value="NAD_kinase"/>
    <property type="match status" value="1"/>
</dbReference>
<dbReference type="InterPro" id="IPR017438">
    <property type="entry name" value="ATP-NAD_kinase_N"/>
</dbReference>
<dbReference type="InterPro" id="IPR017437">
    <property type="entry name" value="ATP-NAD_kinase_PpnK-typ_C"/>
</dbReference>
<dbReference type="InterPro" id="IPR016064">
    <property type="entry name" value="NAD/diacylglycerol_kinase_sf"/>
</dbReference>
<dbReference type="InterPro" id="IPR002504">
    <property type="entry name" value="NADK"/>
</dbReference>
<dbReference type="NCBIfam" id="NF003424">
    <property type="entry name" value="PRK04885.1"/>
    <property type="match status" value="1"/>
</dbReference>
<dbReference type="PANTHER" id="PTHR20275">
    <property type="entry name" value="NAD KINASE"/>
    <property type="match status" value="1"/>
</dbReference>
<dbReference type="PANTHER" id="PTHR20275:SF0">
    <property type="entry name" value="NAD KINASE"/>
    <property type="match status" value="1"/>
</dbReference>
<dbReference type="Pfam" id="PF01513">
    <property type="entry name" value="NAD_kinase"/>
    <property type="match status" value="1"/>
</dbReference>
<dbReference type="Pfam" id="PF20143">
    <property type="entry name" value="NAD_kinase_C"/>
    <property type="match status" value="1"/>
</dbReference>
<dbReference type="SUPFAM" id="SSF111331">
    <property type="entry name" value="NAD kinase/diacylglycerol kinase-like"/>
    <property type="match status" value="1"/>
</dbReference>
<organism>
    <name type="scientific">Lactobacillus delbrueckii subsp. bulgaricus (strain ATCC BAA-365 / Lb-18)</name>
    <dbReference type="NCBI Taxonomy" id="321956"/>
    <lineage>
        <taxon>Bacteria</taxon>
        <taxon>Bacillati</taxon>
        <taxon>Bacillota</taxon>
        <taxon>Bacilli</taxon>
        <taxon>Lactobacillales</taxon>
        <taxon>Lactobacillaceae</taxon>
        <taxon>Lactobacillus</taxon>
    </lineage>
</organism>
<proteinExistence type="inferred from homology"/>
<gene>
    <name evidence="1" type="primary">nadK</name>
    <name type="ordered locus">LBUL_0520</name>
</gene>
<reference key="1">
    <citation type="journal article" date="2006" name="Proc. Natl. Acad. Sci. U.S.A.">
        <title>Comparative genomics of the lactic acid bacteria.</title>
        <authorList>
            <person name="Makarova K.S."/>
            <person name="Slesarev A."/>
            <person name="Wolf Y.I."/>
            <person name="Sorokin A."/>
            <person name="Mirkin B."/>
            <person name="Koonin E.V."/>
            <person name="Pavlov A."/>
            <person name="Pavlova N."/>
            <person name="Karamychev V."/>
            <person name="Polouchine N."/>
            <person name="Shakhova V."/>
            <person name="Grigoriev I."/>
            <person name="Lou Y."/>
            <person name="Rohksar D."/>
            <person name="Lucas S."/>
            <person name="Huang K."/>
            <person name="Goodstein D.M."/>
            <person name="Hawkins T."/>
            <person name="Plengvidhya V."/>
            <person name="Welker D."/>
            <person name="Hughes J."/>
            <person name="Goh Y."/>
            <person name="Benson A."/>
            <person name="Baldwin K."/>
            <person name="Lee J.-H."/>
            <person name="Diaz-Muniz I."/>
            <person name="Dosti B."/>
            <person name="Smeianov V."/>
            <person name="Wechter W."/>
            <person name="Barabote R."/>
            <person name="Lorca G."/>
            <person name="Altermann E."/>
            <person name="Barrangou R."/>
            <person name="Ganesan B."/>
            <person name="Xie Y."/>
            <person name="Rawsthorne H."/>
            <person name="Tamir D."/>
            <person name="Parker C."/>
            <person name="Breidt F."/>
            <person name="Broadbent J.R."/>
            <person name="Hutkins R."/>
            <person name="O'Sullivan D."/>
            <person name="Steele J."/>
            <person name="Unlu G."/>
            <person name="Saier M.H. Jr."/>
            <person name="Klaenhammer T."/>
            <person name="Richardson P."/>
            <person name="Kozyavkin S."/>
            <person name="Weimer B.C."/>
            <person name="Mills D.A."/>
        </authorList>
    </citation>
    <scope>NUCLEOTIDE SEQUENCE [LARGE SCALE GENOMIC DNA]</scope>
    <source>
        <strain>ATCC BAA-365 / Lb-18</strain>
    </source>
</reference>
<feature type="chain" id="PRO_1000059872" description="NAD kinase">
    <location>
        <begin position="1"/>
        <end position="265"/>
    </location>
</feature>
<feature type="active site" description="Proton acceptor" evidence="1">
    <location>
        <position position="45"/>
    </location>
</feature>
<feature type="binding site" evidence="1">
    <location>
        <begin position="45"/>
        <end position="46"/>
    </location>
    <ligand>
        <name>NAD(+)</name>
        <dbReference type="ChEBI" id="CHEBI:57540"/>
    </ligand>
</feature>
<feature type="binding site" evidence="1">
    <location>
        <begin position="122"/>
        <end position="123"/>
    </location>
    <ligand>
        <name>NAD(+)</name>
        <dbReference type="ChEBI" id="CHEBI:57540"/>
    </ligand>
</feature>
<feature type="binding site" evidence="1">
    <location>
        <position position="148"/>
    </location>
    <ligand>
        <name>NAD(+)</name>
        <dbReference type="ChEBI" id="CHEBI:57540"/>
    </ligand>
</feature>
<feature type="binding site" evidence="1">
    <location>
        <position position="150"/>
    </location>
    <ligand>
        <name>NAD(+)</name>
        <dbReference type="ChEBI" id="CHEBI:57540"/>
    </ligand>
</feature>
<feature type="binding site" evidence="1">
    <location>
        <begin position="161"/>
        <end position="166"/>
    </location>
    <ligand>
        <name>NAD(+)</name>
        <dbReference type="ChEBI" id="CHEBI:57540"/>
    </ligand>
</feature>
<feature type="binding site" evidence="1">
    <location>
        <position position="185"/>
    </location>
    <ligand>
        <name>NAD(+)</name>
        <dbReference type="ChEBI" id="CHEBI:57540"/>
    </ligand>
</feature>
<protein>
    <recommendedName>
        <fullName evidence="1">NAD kinase</fullName>
        <ecNumber evidence="1">2.7.1.23</ecNumber>
    </recommendedName>
    <alternativeName>
        <fullName evidence="1">ATP-dependent NAD kinase</fullName>
    </alternativeName>
</protein>
<comment type="function">
    <text evidence="1">Involved in the regulation of the intracellular balance of NAD and NADP, and is a key enzyme in the biosynthesis of NADP. Catalyzes specifically the phosphorylation on 2'-hydroxyl of the adenosine moiety of NAD to yield NADP.</text>
</comment>
<comment type="catalytic activity">
    <reaction evidence="1">
        <text>NAD(+) + ATP = ADP + NADP(+) + H(+)</text>
        <dbReference type="Rhea" id="RHEA:18629"/>
        <dbReference type="ChEBI" id="CHEBI:15378"/>
        <dbReference type="ChEBI" id="CHEBI:30616"/>
        <dbReference type="ChEBI" id="CHEBI:57540"/>
        <dbReference type="ChEBI" id="CHEBI:58349"/>
        <dbReference type="ChEBI" id="CHEBI:456216"/>
        <dbReference type="EC" id="2.7.1.23"/>
    </reaction>
</comment>
<comment type="cofactor">
    <cofactor evidence="1">
        <name>a divalent metal cation</name>
        <dbReference type="ChEBI" id="CHEBI:60240"/>
    </cofactor>
</comment>
<comment type="subcellular location">
    <subcellularLocation>
        <location evidence="1">Cytoplasm</location>
    </subcellularLocation>
</comment>
<comment type="similarity">
    <text evidence="1">Belongs to the NAD kinase family.</text>
</comment>
<keyword id="KW-0067">ATP-binding</keyword>
<keyword id="KW-0963">Cytoplasm</keyword>
<keyword id="KW-0418">Kinase</keyword>
<keyword id="KW-0520">NAD</keyword>
<keyword id="KW-0521">NADP</keyword>
<keyword id="KW-0547">Nucleotide-binding</keyword>
<keyword id="KW-0808">Transferase</keyword>
<name>NADK_LACDB</name>
<evidence type="ECO:0000255" key="1">
    <source>
        <dbReference type="HAMAP-Rule" id="MF_00361"/>
    </source>
</evidence>
<sequence>MKVAIVHNDRVTTQVAVRHLQVLLAEKGILQDQQHPDLVISVGGDGTLISAFHKYKQQLDKVCFAGIHTGHLGFYTDWRNYDMEKLVDALASHPVEENEVGYPLLDMKVTTSCGEKRFLALNEASIKRISKTMEAEVWLGGERFENFRGDGLCVSTPTGSTAYSKSLGGAVIHPRLKTLQLTEIASINNLVFRTVGSPIVIAPDEWITIVPKISDRVVVIVDGERISLTDVQKVDYKIAAEEIRFYQYGHHHFWERVNDAFIGDR</sequence>
<accession>Q04BL3</accession>